<reference key="1">
    <citation type="journal article" date="2008" name="PLoS Genet.">
        <title>The genome of Borrelia recurrentis, the agent of deadly louse-borne relapsing fever, is a degraded subset of tick-borne Borrelia duttonii.</title>
        <authorList>
            <person name="Lescot M."/>
            <person name="Audic S."/>
            <person name="Robert C."/>
            <person name="Nguyen T.T."/>
            <person name="Blanc G."/>
            <person name="Cutler S.J."/>
            <person name="Wincker P."/>
            <person name="Couloux A."/>
            <person name="Claverie J.-M."/>
            <person name="Raoult D."/>
            <person name="Drancourt M."/>
        </authorList>
    </citation>
    <scope>NUCLEOTIDE SEQUENCE [LARGE SCALE GENOMIC DNA]</scope>
    <source>
        <strain>Ly</strain>
    </source>
</reference>
<accession>B5RM75</accession>
<feature type="chain" id="PRO_1000119673" description="Chaperone protein DnaK">
    <location>
        <begin position="1"/>
        <end position="632"/>
    </location>
</feature>
<feature type="region of interest" description="Disordered" evidence="2">
    <location>
        <begin position="598"/>
        <end position="632"/>
    </location>
</feature>
<feature type="compositionally biased region" description="Polar residues" evidence="2">
    <location>
        <begin position="602"/>
        <end position="617"/>
    </location>
</feature>
<feature type="compositionally biased region" description="Basic and acidic residues" evidence="2">
    <location>
        <begin position="618"/>
        <end position="632"/>
    </location>
</feature>
<feature type="modified residue" description="Phosphothreonine; by autocatalysis" evidence="1">
    <location>
        <position position="198"/>
    </location>
</feature>
<proteinExistence type="inferred from homology"/>
<gene>
    <name evidence="1" type="primary">dnaK</name>
    <name type="ordered locus">BDU_520</name>
</gene>
<organism>
    <name type="scientific">Borrelia duttonii (strain Ly)</name>
    <dbReference type="NCBI Taxonomy" id="412419"/>
    <lineage>
        <taxon>Bacteria</taxon>
        <taxon>Pseudomonadati</taxon>
        <taxon>Spirochaetota</taxon>
        <taxon>Spirochaetia</taxon>
        <taxon>Spirochaetales</taxon>
        <taxon>Borreliaceae</taxon>
        <taxon>Borrelia</taxon>
    </lineage>
</organism>
<name>DNAK_BORDL</name>
<evidence type="ECO:0000255" key="1">
    <source>
        <dbReference type="HAMAP-Rule" id="MF_00332"/>
    </source>
</evidence>
<evidence type="ECO:0000256" key="2">
    <source>
        <dbReference type="SAM" id="MobiDB-lite"/>
    </source>
</evidence>
<keyword id="KW-0067">ATP-binding</keyword>
<keyword id="KW-0143">Chaperone</keyword>
<keyword id="KW-0547">Nucleotide-binding</keyword>
<keyword id="KW-0597">Phosphoprotein</keyword>
<keyword id="KW-0346">Stress response</keyword>
<sequence length="632" mass="68750">MGKIIGIDLGTTNSCVAIMEHGKPVVIQNSEGGRTTPSIVAYTNKGERLVGQVAKNQMVTNPENTIYSIKRFMGRRFEEVASEIKMVPYKVEKGQNGDARVNISNIKKQMSPPEISAATLTKMKETAEAYLGEKVTEAVITVPAYFNDAQRQATKDAGKIAGLDVKRIVNEPTAAALAYGIEKKHEEIVAVYDLGGGTFDISILELGDGVFEVKSTNGDTHLGGDNFDDEIIKYLITEFKKDSAIDLSNDKMALQRLKEAAEKAKIELSGAQEASINLPFITADANGPKHLQYTLTRAKFEQMVDHLVQKTKEPCLKAIKDAGLKASDINEVILVGGSTRIPAIQKIVKEIFGQEPNKGVNPDEAVAIGAAIQGGILTGEAKDMVLLDVTPLSLGIETLGGVMTKLIERNTTIPTKKSQVFSTAADNQTSVDIKVLQGEREMASQNRVLGNFILDGIPAAPRGVPQIEVSFDIDANGIVHVSAKDMGTGKEQKIRIESSSGLSEEEIERMVKDAESHAEEDKKLKEGIEAKNIANSLIYQTEKSLKEYGEKITNQDKEAIENKIKELKDALEGSDISLLKSKTEELQQASYKIAEMMYKDAQASSPDQNNAQNNAGSESKEADYEVVDEDKK</sequence>
<protein>
    <recommendedName>
        <fullName evidence="1">Chaperone protein DnaK</fullName>
    </recommendedName>
    <alternativeName>
        <fullName evidence="1">HSP70</fullName>
    </alternativeName>
    <alternativeName>
        <fullName evidence="1">Heat shock 70 kDa protein</fullName>
    </alternativeName>
    <alternativeName>
        <fullName evidence="1">Heat shock protein 70</fullName>
    </alternativeName>
</protein>
<comment type="function">
    <text evidence="1">Acts as a chaperone.</text>
</comment>
<comment type="induction">
    <text evidence="1">By stress conditions e.g. heat shock.</text>
</comment>
<comment type="similarity">
    <text evidence="1">Belongs to the heat shock protein 70 family.</text>
</comment>
<dbReference type="EMBL" id="CP000976">
    <property type="protein sequence ID" value="ACH93461.1"/>
    <property type="molecule type" value="Genomic_DNA"/>
</dbReference>
<dbReference type="RefSeq" id="WP_012538270.1">
    <property type="nucleotide sequence ID" value="NC_011229.1"/>
</dbReference>
<dbReference type="SMR" id="B5RM75"/>
<dbReference type="STRING" id="412419.BDU_520"/>
<dbReference type="KEGG" id="bdu:BDU_520"/>
<dbReference type="eggNOG" id="COG0443">
    <property type="taxonomic scope" value="Bacteria"/>
</dbReference>
<dbReference type="HOGENOM" id="CLU_005965_2_4_12"/>
<dbReference type="OrthoDB" id="9766019at2"/>
<dbReference type="Proteomes" id="UP000000611">
    <property type="component" value="Chromosome"/>
</dbReference>
<dbReference type="GO" id="GO:0005524">
    <property type="term" value="F:ATP binding"/>
    <property type="evidence" value="ECO:0007669"/>
    <property type="project" value="UniProtKB-UniRule"/>
</dbReference>
<dbReference type="GO" id="GO:0140662">
    <property type="term" value="F:ATP-dependent protein folding chaperone"/>
    <property type="evidence" value="ECO:0007669"/>
    <property type="project" value="InterPro"/>
</dbReference>
<dbReference type="GO" id="GO:0051082">
    <property type="term" value="F:unfolded protein binding"/>
    <property type="evidence" value="ECO:0007669"/>
    <property type="project" value="InterPro"/>
</dbReference>
<dbReference type="CDD" id="cd10234">
    <property type="entry name" value="ASKHA_NBD_HSP70_DnaK-like"/>
    <property type="match status" value="1"/>
</dbReference>
<dbReference type="FunFam" id="2.60.34.10:FF:000014">
    <property type="entry name" value="Chaperone protein DnaK HSP70"/>
    <property type="match status" value="1"/>
</dbReference>
<dbReference type="FunFam" id="3.30.420.40:FF:000020">
    <property type="entry name" value="Chaperone protein HscA homolog"/>
    <property type="match status" value="1"/>
</dbReference>
<dbReference type="FunFam" id="3.30.30.30:FF:000005">
    <property type="entry name" value="Heat shock protein ssb1"/>
    <property type="match status" value="1"/>
</dbReference>
<dbReference type="FunFam" id="1.20.1270.10:FF:000001">
    <property type="entry name" value="Molecular chaperone DnaK"/>
    <property type="match status" value="1"/>
</dbReference>
<dbReference type="FunFam" id="3.30.420.40:FF:000004">
    <property type="entry name" value="Molecular chaperone DnaK"/>
    <property type="match status" value="1"/>
</dbReference>
<dbReference type="FunFam" id="3.90.640.10:FF:000003">
    <property type="entry name" value="Molecular chaperone DnaK"/>
    <property type="match status" value="1"/>
</dbReference>
<dbReference type="Gene3D" id="1.20.1270.10">
    <property type="match status" value="1"/>
</dbReference>
<dbReference type="Gene3D" id="3.30.420.40">
    <property type="match status" value="2"/>
</dbReference>
<dbReference type="Gene3D" id="3.90.640.10">
    <property type="entry name" value="Actin, Chain A, domain 4"/>
    <property type="match status" value="1"/>
</dbReference>
<dbReference type="Gene3D" id="2.60.34.10">
    <property type="entry name" value="Substrate Binding Domain Of DNAk, Chain A, domain 1"/>
    <property type="match status" value="1"/>
</dbReference>
<dbReference type="HAMAP" id="MF_00332">
    <property type="entry name" value="DnaK"/>
    <property type="match status" value="1"/>
</dbReference>
<dbReference type="InterPro" id="IPR043129">
    <property type="entry name" value="ATPase_NBD"/>
</dbReference>
<dbReference type="InterPro" id="IPR012725">
    <property type="entry name" value="Chaperone_DnaK"/>
</dbReference>
<dbReference type="InterPro" id="IPR018181">
    <property type="entry name" value="Heat_shock_70_CS"/>
</dbReference>
<dbReference type="InterPro" id="IPR029048">
    <property type="entry name" value="HSP70_C_sf"/>
</dbReference>
<dbReference type="InterPro" id="IPR029047">
    <property type="entry name" value="HSP70_peptide-bd_sf"/>
</dbReference>
<dbReference type="InterPro" id="IPR013126">
    <property type="entry name" value="Hsp_70_fam"/>
</dbReference>
<dbReference type="NCBIfam" id="NF001413">
    <property type="entry name" value="PRK00290.1"/>
    <property type="match status" value="1"/>
</dbReference>
<dbReference type="NCBIfam" id="NF003520">
    <property type="entry name" value="PRK05183.1"/>
    <property type="match status" value="1"/>
</dbReference>
<dbReference type="NCBIfam" id="TIGR02350">
    <property type="entry name" value="prok_dnaK"/>
    <property type="match status" value="1"/>
</dbReference>
<dbReference type="PANTHER" id="PTHR19375">
    <property type="entry name" value="HEAT SHOCK PROTEIN 70KDA"/>
    <property type="match status" value="1"/>
</dbReference>
<dbReference type="Pfam" id="PF00012">
    <property type="entry name" value="HSP70"/>
    <property type="match status" value="1"/>
</dbReference>
<dbReference type="PRINTS" id="PR00301">
    <property type="entry name" value="HEATSHOCK70"/>
</dbReference>
<dbReference type="SUPFAM" id="SSF53067">
    <property type="entry name" value="Actin-like ATPase domain"/>
    <property type="match status" value="2"/>
</dbReference>
<dbReference type="SUPFAM" id="SSF100934">
    <property type="entry name" value="Heat shock protein 70kD (HSP70), C-terminal subdomain"/>
    <property type="match status" value="1"/>
</dbReference>
<dbReference type="SUPFAM" id="SSF100920">
    <property type="entry name" value="Heat shock protein 70kD (HSP70), peptide-binding domain"/>
    <property type="match status" value="1"/>
</dbReference>
<dbReference type="PROSITE" id="PS00297">
    <property type="entry name" value="HSP70_1"/>
    <property type="match status" value="1"/>
</dbReference>
<dbReference type="PROSITE" id="PS00329">
    <property type="entry name" value="HSP70_2"/>
    <property type="match status" value="1"/>
</dbReference>
<dbReference type="PROSITE" id="PS01036">
    <property type="entry name" value="HSP70_3"/>
    <property type="match status" value="1"/>
</dbReference>